<feature type="chain" id="PRO_0000202260" description="Uncharacterized protein TP_0467">
    <location>
        <begin position="1"/>
        <end position="82"/>
    </location>
</feature>
<protein>
    <recommendedName>
        <fullName>Uncharacterized protein TP_0467</fullName>
    </recommendedName>
</protein>
<reference key="1">
    <citation type="journal article" date="1998" name="Science">
        <title>Complete genome sequence of Treponema pallidum, the syphilis spirochete.</title>
        <authorList>
            <person name="Fraser C.M."/>
            <person name="Norris S.J."/>
            <person name="Weinstock G.M."/>
            <person name="White O."/>
            <person name="Sutton G.G."/>
            <person name="Dodson R.J."/>
            <person name="Gwinn M.L."/>
            <person name="Hickey E.K."/>
            <person name="Clayton R.A."/>
            <person name="Ketchum K.A."/>
            <person name="Sodergren E."/>
            <person name="Hardham J.M."/>
            <person name="McLeod M.P."/>
            <person name="Salzberg S.L."/>
            <person name="Peterson J.D."/>
            <person name="Khalak H.G."/>
            <person name="Richardson D.L."/>
            <person name="Howell J.K."/>
            <person name="Chidambaram M."/>
            <person name="Utterback T.R."/>
            <person name="McDonald L.A."/>
            <person name="Artiach P."/>
            <person name="Bowman C."/>
            <person name="Cotton M.D."/>
            <person name="Fujii C."/>
            <person name="Garland S.A."/>
            <person name="Hatch B."/>
            <person name="Horst K."/>
            <person name="Roberts K.M."/>
            <person name="Sandusky M."/>
            <person name="Weidman J.F."/>
            <person name="Smith H.O."/>
            <person name="Venter J.C."/>
        </authorList>
    </citation>
    <scope>NUCLEOTIDE SEQUENCE [LARGE SCALE GENOMIC DNA]</scope>
    <source>
        <strain>Nichols</strain>
    </source>
</reference>
<name>Y467_TREPA</name>
<accession>O83480</accession>
<keyword id="KW-1185">Reference proteome</keyword>
<proteinExistence type="predicted"/>
<organism>
    <name type="scientific">Treponema pallidum (strain Nichols)</name>
    <dbReference type="NCBI Taxonomy" id="243276"/>
    <lineage>
        <taxon>Bacteria</taxon>
        <taxon>Pseudomonadati</taxon>
        <taxon>Spirochaetota</taxon>
        <taxon>Spirochaetia</taxon>
        <taxon>Spirochaetales</taxon>
        <taxon>Treponemataceae</taxon>
        <taxon>Treponema</taxon>
    </lineage>
</organism>
<sequence length="82" mass="9614">MNSYFSALPLKCVRRPFILSRNEGWGIKRFYVADEPHRSFLCMQEGVRRGGGESEITQRKADVLRKSIRSADRYKEDRSCRT</sequence>
<dbReference type="EMBL" id="AE000520">
    <property type="protein sequence ID" value="AAC65458.1"/>
    <property type="molecule type" value="Genomic_DNA"/>
</dbReference>
<dbReference type="PIR" id="E71321">
    <property type="entry name" value="E71321"/>
</dbReference>
<dbReference type="RefSeq" id="WP_010881916.1">
    <property type="nucleotide sequence ID" value="NC_021490.2"/>
</dbReference>
<dbReference type="IntAct" id="O83480">
    <property type="interactions" value="9"/>
</dbReference>
<dbReference type="STRING" id="243276.TP_0467"/>
<dbReference type="EnsemblBacteria" id="AAC65458">
    <property type="protein sequence ID" value="AAC65458"/>
    <property type="gene ID" value="TP_0467"/>
</dbReference>
<dbReference type="KEGG" id="tpa:TP_0467"/>
<dbReference type="KEGG" id="tpw:TPANIC_0467"/>
<dbReference type="HOGENOM" id="CLU_2557279_0_0_12"/>
<dbReference type="Proteomes" id="UP000000811">
    <property type="component" value="Chromosome"/>
</dbReference>
<gene>
    <name type="ordered locus">TP_0467</name>
</gene>